<accession>A4WBC7</accession>
<feature type="chain" id="PRO_0000335030" description="Glutamyl-tRNA reductase">
    <location>
        <begin position="1"/>
        <end position="418"/>
    </location>
</feature>
<feature type="active site" description="Nucleophile" evidence="1">
    <location>
        <position position="50"/>
    </location>
</feature>
<feature type="binding site" evidence="1">
    <location>
        <begin position="49"/>
        <end position="52"/>
    </location>
    <ligand>
        <name>substrate</name>
    </ligand>
</feature>
<feature type="binding site" evidence="1">
    <location>
        <position position="109"/>
    </location>
    <ligand>
        <name>substrate</name>
    </ligand>
</feature>
<feature type="binding site" evidence="1">
    <location>
        <begin position="114"/>
        <end position="116"/>
    </location>
    <ligand>
        <name>substrate</name>
    </ligand>
</feature>
<feature type="binding site" evidence="1">
    <location>
        <position position="120"/>
    </location>
    <ligand>
        <name>substrate</name>
    </ligand>
</feature>
<feature type="binding site" evidence="1">
    <location>
        <begin position="189"/>
        <end position="194"/>
    </location>
    <ligand>
        <name>NADP(+)</name>
        <dbReference type="ChEBI" id="CHEBI:58349"/>
    </ligand>
</feature>
<feature type="site" description="Important for activity" evidence="1">
    <location>
        <position position="99"/>
    </location>
</feature>
<keyword id="KW-0521">NADP</keyword>
<keyword id="KW-0560">Oxidoreductase</keyword>
<keyword id="KW-0627">Porphyrin biosynthesis</keyword>
<organism>
    <name type="scientific">Enterobacter sp. (strain 638)</name>
    <dbReference type="NCBI Taxonomy" id="399742"/>
    <lineage>
        <taxon>Bacteria</taxon>
        <taxon>Pseudomonadati</taxon>
        <taxon>Pseudomonadota</taxon>
        <taxon>Gammaproteobacteria</taxon>
        <taxon>Enterobacterales</taxon>
        <taxon>Enterobacteriaceae</taxon>
        <taxon>Enterobacter</taxon>
    </lineage>
</organism>
<proteinExistence type="inferred from homology"/>
<protein>
    <recommendedName>
        <fullName evidence="1">Glutamyl-tRNA reductase</fullName>
        <shortName evidence="1">GluTR</shortName>
        <ecNumber evidence="1">1.2.1.70</ecNumber>
    </recommendedName>
</protein>
<gene>
    <name evidence="1" type="primary">hemA</name>
    <name type="ordered locus">Ent638_2338</name>
</gene>
<sequence>MTLLALGINHKTAPVALRERVTFSPDTLDQALDSLLAQPMVQGGVVLSTCNRTELYLSVEEQDNLHEALIRWLCEYHNLNEEELRTSVYWHQDNDAVSHLMRVASGLDSLVLGEPQILGQVKKAFADSQKGHLKASELERMFQKSFSVAKRVRTETDIGASAVSVAFAACTLARQIFESLSTVTVLLVGAGETIELVARHLREHKVKHMIIANRTRERAQVLADEVGAEVIALSDIDERLKDADIIISSTASPLPIIGKGMVERALKSRRNQPMLLVDIAVPRDVEPEVGKLANAYLYSVDDLQSIISHNLAQRKAAAVQAETIVEQESGEFMAWLRAQSASETIREYRGQAEQVRDDLTAKAMAALEQGGDPQVIMQDLAWKLTNRLIHAPTKSLQQAARNGDDERLTILRNSLGLE</sequence>
<dbReference type="EC" id="1.2.1.70" evidence="1"/>
<dbReference type="EMBL" id="CP000653">
    <property type="protein sequence ID" value="ABP61007.1"/>
    <property type="status" value="ALT_INIT"/>
    <property type="molecule type" value="Genomic_DNA"/>
</dbReference>
<dbReference type="RefSeq" id="WP_041689438.1">
    <property type="nucleotide sequence ID" value="NC_009436.1"/>
</dbReference>
<dbReference type="SMR" id="A4WBC7"/>
<dbReference type="STRING" id="399742.Ent638_2338"/>
<dbReference type="KEGG" id="ent:Ent638_2338"/>
<dbReference type="eggNOG" id="COG0373">
    <property type="taxonomic scope" value="Bacteria"/>
</dbReference>
<dbReference type="HOGENOM" id="CLU_035113_2_2_6"/>
<dbReference type="OrthoDB" id="110209at2"/>
<dbReference type="UniPathway" id="UPA00251">
    <property type="reaction ID" value="UER00316"/>
</dbReference>
<dbReference type="Proteomes" id="UP000000230">
    <property type="component" value="Chromosome"/>
</dbReference>
<dbReference type="GO" id="GO:0008883">
    <property type="term" value="F:glutamyl-tRNA reductase activity"/>
    <property type="evidence" value="ECO:0007669"/>
    <property type="project" value="UniProtKB-UniRule"/>
</dbReference>
<dbReference type="GO" id="GO:0050661">
    <property type="term" value="F:NADP binding"/>
    <property type="evidence" value="ECO:0007669"/>
    <property type="project" value="InterPro"/>
</dbReference>
<dbReference type="GO" id="GO:0019353">
    <property type="term" value="P:protoporphyrinogen IX biosynthetic process from glutamate"/>
    <property type="evidence" value="ECO:0007669"/>
    <property type="project" value="TreeGrafter"/>
</dbReference>
<dbReference type="CDD" id="cd05213">
    <property type="entry name" value="NAD_bind_Glutamyl_tRNA_reduct"/>
    <property type="match status" value="1"/>
</dbReference>
<dbReference type="FunFam" id="3.30.460.30:FF:000001">
    <property type="entry name" value="Glutamyl-tRNA reductase"/>
    <property type="match status" value="1"/>
</dbReference>
<dbReference type="FunFam" id="3.40.50.720:FF:000031">
    <property type="entry name" value="Glutamyl-tRNA reductase"/>
    <property type="match status" value="1"/>
</dbReference>
<dbReference type="Gene3D" id="3.30.460.30">
    <property type="entry name" value="Glutamyl-tRNA reductase, N-terminal domain"/>
    <property type="match status" value="1"/>
</dbReference>
<dbReference type="Gene3D" id="3.40.50.720">
    <property type="entry name" value="NAD(P)-binding Rossmann-like Domain"/>
    <property type="match status" value="1"/>
</dbReference>
<dbReference type="HAMAP" id="MF_00087">
    <property type="entry name" value="Glu_tRNA_reductase"/>
    <property type="match status" value="1"/>
</dbReference>
<dbReference type="InterPro" id="IPR000343">
    <property type="entry name" value="4pyrrol_synth_GluRdtase"/>
</dbReference>
<dbReference type="InterPro" id="IPR015896">
    <property type="entry name" value="4pyrrol_synth_GluRdtase_dimer"/>
</dbReference>
<dbReference type="InterPro" id="IPR015895">
    <property type="entry name" value="4pyrrol_synth_GluRdtase_N"/>
</dbReference>
<dbReference type="InterPro" id="IPR018214">
    <property type="entry name" value="GluRdtase_CS"/>
</dbReference>
<dbReference type="InterPro" id="IPR036453">
    <property type="entry name" value="GluRdtase_dimer_dom_sf"/>
</dbReference>
<dbReference type="InterPro" id="IPR036343">
    <property type="entry name" value="GluRdtase_N_sf"/>
</dbReference>
<dbReference type="InterPro" id="IPR036291">
    <property type="entry name" value="NAD(P)-bd_dom_sf"/>
</dbReference>
<dbReference type="InterPro" id="IPR006151">
    <property type="entry name" value="Shikm_DH/Glu-tRNA_Rdtase"/>
</dbReference>
<dbReference type="NCBIfam" id="TIGR01035">
    <property type="entry name" value="hemA"/>
    <property type="match status" value="1"/>
</dbReference>
<dbReference type="PANTHER" id="PTHR43013">
    <property type="entry name" value="GLUTAMYL-TRNA REDUCTASE"/>
    <property type="match status" value="1"/>
</dbReference>
<dbReference type="PANTHER" id="PTHR43013:SF1">
    <property type="entry name" value="GLUTAMYL-TRNA REDUCTASE"/>
    <property type="match status" value="1"/>
</dbReference>
<dbReference type="Pfam" id="PF00745">
    <property type="entry name" value="GlutR_dimer"/>
    <property type="match status" value="1"/>
</dbReference>
<dbReference type="Pfam" id="PF05201">
    <property type="entry name" value="GlutR_N"/>
    <property type="match status" value="1"/>
</dbReference>
<dbReference type="Pfam" id="PF01488">
    <property type="entry name" value="Shikimate_DH"/>
    <property type="match status" value="1"/>
</dbReference>
<dbReference type="PIRSF" id="PIRSF000445">
    <property type="entry name" value="4pyrrol_synth_GluRdtase"/>
    <property type="match status" value="1"/>
</dbReference>
<dbReference type="SUPFAM" id="SSF69742">
    <property type="entry name" value="Glutamyl tRNA-reductase catalytic, N-terminal domain"/>
    <property type="match status" value="1"/>
</dbReference>
<dbReference type="SUPFAM" id="SSF69075">
    <property type="entry name" value="Glutamyl tRNA-reductase dimerization domain"/>
    <property type="match status" value="1"/>
</dbReference>
<dbReference type="SUPFAM" id="SSF51735">
    <property type="entry name" value="NAD(P)-binding Rossmann-fold domains"/>
    <property type="match status" value="1"/>
</dbReference>
<dbReference type="PROSITE" id="PS00747">
    <property type="entry name" value="GLUTR"/>
    <property type="match status" value="1"/>
</dbReference>
<reference key="1">
    <citation type="journal article" date="2010" name="PLoS Genet.">
        <title>Genome sequence of the plant growth promoting endophytic bacterium Enterobacter sp. 638.</title>
        <authorList>
            <person name="Taghavi S."/>
            <person name="van der Lelie D."/>
            <person name="Hoffman A."/>
            <person name="Zhang Y.B."/>
            <person name="Walla M.D."/>
            <person name="Vangronsveld J."/>
            <person name="Newman L."/>
            <person name="Monchy S."/>
        </authorList>
    </citation>
    <scope>NUCLEOTIDE SEQUENCE [LARGE SCALE GENOMIC DNA]</scope>
    <source>
        <strain>638</strain>
    </source>
</reference>
<name>HEM1_ENT38</name>
<evidence type="ECO:0000255" key="1">
    <source>
        <dbReference type="HAMAP-Rule" id="MF_00087"/>
    </source>
</evidence>
<evidence type="ECO:0000305" key="2"/>
<comment type="function">
    <text evidence="1">Catalyzes the NADPH-dependent reduction of glutamyl-tRNA(Glu) to glutamate 1-semialdehyde (GSA).</text>
</comment>
<comment type="catalytic activity">
    <reaction evidence="1">
        <text>(S)-4-amino-5-oxopentanoate + tRNA(Glu) + NADP(+) = L-glutamyl-tRNA(Glu) + NADPH + H(+)</text>
        <dbReference type="Rhea" id="RHEA:12344"/>
        <dbReference type="Rhea" id="RHEA-COMP:9663"/>
        <dbReference type="Rhea" id="RHEA-COMP:9680"/>
        <dbReference type="ChEBI" id="CHEBI:15378"/>
        <dbReference type="ChEBI" id="CHEBI:57501"/>
        <dbReference type="ChEBI" id="CHEBI:57783"/>
        <dbReference type="ChEBI" id="CHEBI:58349"/>
        <dbReference type="ChEBI" id="CHEBI:78442"/>
        <dbReference type="ChEBI" id="CHEBI:78520"/>
        <dbReference type="EC" id="1.2.1.70"/>
    </reaction>
</comment>
<comment type="pathway">
    <text evidence="1">Porphyrin-containing compound metabolism; protoporphyrin-IX biosynthesis; 5-aminolevulinate from L-glutamyl-tRNA(Glu): step 1/2.</text>
</comment>
<comment type="subunit">
    <text evidence="1">Homodimer.</text>
</comment>
<comment type="domain">
    <text evidence="1">Possesses an unusual extended V-shaped dimeric structure with each monomer consisting of three distinct domains arranged along a curved 'spinal' alpha-helix. The N-terminal catalytic domain specifically recognizes the glutamate moiety of the substrate. The second domain is the NADPH-binding domain, and the third C-terminal domain is responsible for dimerization.</text>
</comment>
<comment type="miscellaneous">
    <text evidence="1">During catalysis, the active site Cys acts as a nucleophile attacking the alpha-carbonyl group of tRNA-bound glutamate with the formation of a thioester intermediate between enzyme and glutamate, and the concomitant release of tRNA(Glu). The thioester intermediate is finally reduced by direct hydride transfer from NADPH, to form the product GSA.</text>
</comment>
<comment type="similarity">
    <text evidence="1">Belongs to the glutamyl-tRNA reductase family.</text>
</comment>
<comment type="sequence caution" evidence="2">
    <conflict type="erroneous initiation">
        <sequence resource="EMBL-CDS" id="ABP61007"/>
    </conflict>
</comment>